<protein>
    <recommendedName>
        <fullName evidence="3">Small ribosomal subunit protein uS4c</fullName>
    </recommendedName>
    <alternativeName>
        <fullName>30S ribosomal protein S4, chloroplastic</fullName>
    </alternativeName>
</protein>
<name>RR4_DRIGR</name>
<geneLocation type="chloroplast"/>
<keyword id="KW-0150">Chloroplast</keyword>
<keyword id="KW-0934">Plastid</keyword>
<keyword id="KW-0687">Ribonucleoprotein</keyword>
<keyword id="KW-0689">Ribosomal protein</keyword>
<keyword id="KW-0694">RNA-binding</keyword>
<keyword id="KW-0699">rRNA-binding</keyword>
<reference key="1">
    <citation type="journal article" date="2006" name="BMC Evol. Biol.">
        <title>Complete plastid genome sequences of Drimys, Liriodendron, and Piper: implications for the phylogenetic relationships of magnoliids.</title>
        <authorList>
            <person name="Cai Z."/>
            <person name="Penaflor C."/>
            <person name="Kuehl J.V."/>
            <person name="Leebens-Mack J."/>
            <person name="Carlson J.E."/>
            <person name="dePamphilis C.W."/>
            <person name="Boore J.L."/>
            <person name="Jansen R.K."/>
        </authorList>
    </citation>
    <scope>NUCLEOTIDE SEQUENCE [LARGE SCALE GENOMIC DNA]</scope>
</reference>
<gene>
    <name type="primary">rps4</name>
</gene>
<evidence type="ECO:0000250" key="1"/>
<evidence type="ECO:0000256" key="2">
    <source>
        <dbReference type="SAM" id="MobiDB-lite"/>
    </source>
</evidence>
<evidence type="ECO:0000305" key="3"/>
<organism>
    <name type="scientific">Drimys granadensis</name>
    <dbReference type="NCBI Taxonomy" id="224735"/>
    <lineage>
        <taxon>Eukaryota</taxon>
        <taxon>Viridiplantae</taxon>
        <taxon>Streptophyta</taxon>
        <taxon>Embryophyta</taxon>
        <taxon>Tracheophyta</taxon>
        <taxon>Spermatophyta</taxon>
        <taxon>Magnoliopsida</taxon>
        <taxon>Magnoliidae</taxon>
        <taxon>Canellales</taxon>
        <taxon>Winteraceae</taxon>
        <taxon>Drimys</taxon>
    </lineage>
</organism>
<dbReference type="EMBL" id="DQ887676">
    <property type="protein sequence ID" value="ABH88299.1"/>
    <property type="molecule type" value="Genomic_DNA"/>
</dbReference>
<dbReference type="RefSeq" id="YP_784388.1">
    <property type="nucleotide sequence ID" value="NC_008456.1"/>
</dbReference>
<dbReference type="SMR" id="Q06GZ5"/>
<dbReference type="GeneID" id="4363531"/>
<dbReference type="GO" id="GO:0009507">
    <property type="term" value="C:chloroplast"/>
    <property type="evidence" value="ECO:0007669"/>
    <property type="project" value="UniProtKB-SubCell"/>
</dbReference>
<dbReference type="GO" id="GO:0015935">
    <property type="term" value="C:small ribosomal subunit"/>
    <property type="evidence" value="ECO:0007669"/>
    <property type="project" value="InterPro"/>
</dbReference>
<dbReference type="GO" id="GO:0019843">
    <property type="term" value="F:rRNA binding"/>
    <property type="evidence" value="ECO:0007669"/>
    <property type="project" value="UniProtKB-UniRule"/>
</dbReference>
<dbReference type="GO" id="GO:0003735">
    <property type="term" value="F:structural constituent of ribosome"/>
    <property type="evidence" value="ECO:0007669"/>
    <property type="project" value="InterPro"/>
</dbReference>
<dbReference type="GO" id="GO:0042274">
    <property type="term" value="P:ribosomal small subunit biogenesis"/>
    <property type="evidence" value="ECO:0007669"/>
    <property type="project" value="TreeGrafter"/>
</dbReference>
<dbReference type="GO" id="GO:0006412">
    <property type="term" value="P:translation"/>
    <property type="evidence" value="ECO:0007669"/>
    <property type="project" value="UniProtKB-UniRule"/>
</dbReference>
<dbReference type="CDD" id="cd00165">
    <property type="entry name" value="S4"/>
    <property type="match status" value="1"/>
</dbReference>
<dbReference type="FunFam" id="1.10.1050.10:FF:000002">
    <property type="entry name" value="30S ribosomal protein S4, chloroplastic"/>
    <property type="match status" value="1"/>
</dbReference>
<dbReference type="FunFam" id="3.10.290.10:FF:000081">
    <property type="entry name" value="30S ribosomal protein S4, chloroplastic"/>
    <property type="match status" value="1"/>
</dbReference>
<dbReference type="Gene3D" id="1.10.1050.10">
    <property type="entry name" value="Ribosomal Protein S4 Delta 41, Chain A, domain 1"/>
    <property type="match status" value="1"/>
</dbReference>
<dbReference type="Gene3D" id="3.10.290.10">
    <property type="entry name" value="RNA-binding S4 domain"/>
    <property type="match status" value="1"/>
</dbReference>
<dbReference type="HAMAP" id="MF_01306_B">
    <property type="entry name" value="Ribosomal_uS4_B"/>
    <property type="match status" value="1"/>
</dbReference>
<dbReference type="InterPro" id="IPR022801">
    <property type="entry name" value="Ribosomal_uS4"/>
</dbReference>
<dbReference type="InterPro" id="IPR005709">
    <property type="entry name" value="Ribosomal_uS4_bac-type"/>
</dbReference>
<dbReference type="InterPro" id="IPR018079">
    <property type="entry name" value="Ribosomal_uS4_CS"/>
</dbReference>
<dbReference type="InterPro" id="IPR001912">
    <property type="entry name" value="Ribosomal_uS4_N"/>
</dbReference>
<dbReference type="InterPro" id="IPR002942">
    <property type="entry name" value="S4_RNA-bd"/>
</dbReference>
<dbReference type="InterPro" id="IPR036986">
    <property type="entry name" value="S4_RNA-bd_sf"/>
</dbReference>
<dbReference type="NCBIfam" id="NF003717">
    <property type="entry name" value="PRK05327.1"/>
    <property type="match status" value="1"/>
</dbReference>
<dbReference type="NCBIfam" id="TIGR01017">
    <property type="entry name" value="rpsD_bact"/>
    <property type="match status" value="1"/>
</dbReference>
<dbReference type="PANTHER" id="PTHR11831">
    <property type="entry name" value="30S 40S RIBOSOMAL PROTEIN"/>
    <property type="match status" value="1"/>
</dbReference>
<dbReference type="PANTHER" id="PTHR11831:SF4">
    <property type="entry name" value="SMALL RIBOSOMAL SUBUNIT PROTEIN US4M"/>
    <property type="match status" value="1"/>
</dbReference>
<dbReference type="Pfam" id="PF00163">
    <property type="entry name" value="Ribosomal_S4"/>
    <property type="match status" value="1"/>
</dbReference>
<dbReference type="Pfam" id="PF01479">
    <property type="entry name" value="S4"/>
    <property type="match status" value="1"/>
</dbReference>
<dbReference type="SMART" id="SM01390">
    <property type="entry name" value="Ribosomal_S4"/>
    <property type="match status" value="1"/>
</dbReference>
<dbReference type="SMART" id="SM00363">
    <property type="entry name" value="S4"/>
    <property type="match status" value="1"/>
</dbReference>
<dbReference type="SUPFAM" id="SSF55174">
    <property type="entry name" value="Alpha-L RNA-binding motif"/>
    <property type="match status" value="1"/>
</dbReference>
<dbReference type="PROSITE" id="PS00632">
    <property type="entry name" value="RIBOSOMAL_S4"/>
    <property type="match status" value="1"/>
</dbReference>
<dbReference type="PROSITE" id="PS50889">
    <property type="entry name" value="S4"/>
    <property type="match status" value="1"/>
</dbReference>
<comment type="function">
    <text evidence="1">One of the primary rRNA binding proteins, it binds directly to 16S rRNA where it nucleates assembly of the body of the 30S subunit.</text>
</comment>
<comment type="function">
    <text evidence="1">With S5 and S12 plays an important role in translational accuracy.</text>
</comment>
<comment type="subunit">
    <text evidence="1">Part of the 30S ribosomal subunit. Contacts protein S5. The interaction surface between S4 and S5 is involved in control of translational fidelity (By similarity).</text>
</comment>
<comment type="subcellular location">
    <subcellularLocation>
        <location>Plastid</location>
        <location>Chloroplast</location>
    </subcellularLocation>
</comment>
<comment type="similarity">
    <text evidence="3">Belongs to the universal ribosomal protein uS4 family.</text>
</comment>
<sequence>MSRYRGPRFKKIRRLGALPGLTRKRPRSGSDLRNQSRSGKRSQYRIRLEEKQKLRFHYGLTERQLLRYVRIAGKAKGSTGQVLLQLLEMRLDNILFRLGMASTIPGARQLVNHRHILVNGRIVDIPSYRCKPQDIITTRDEQRSRALIQNYMDSSPHEELAKHLSLYSSQYKGLVNQIIDIKWIGLKINELLVVEYYSRQT</sequence>
<proteinExistence type="inferred from homology"/>
<accession>Q06GZ5</accession>
<feature type="chain" id="PRO_0000277009" description="Small ribosomal subunit protein uS4c">
    <location>
        <begin position="1"/>
        <end position="201"/>
    </location>
</feature>
<feature type="domain" description="S4 RNA-binding">
    <location>
        <begin position="89"/>
        <end position="150"/>
    </location>
</feature>
<feature type="region of interest" description="Disordered" evidence="2">
    <location>
        <begin position="15"/>
        <end position="43"/>
    </location>
</feature>